<reference key="1">
    <citation type="journal article" date="2001" name="Nature">
        <title>Genome sequence of enterohaemorrhagic Escherichia coli O157:H7.</title>
        <authorList>
            <person name="Perna N.T."/>
            <person name="Plunkett G. III"/>
            <person name="Burland V."/>
            <person name="Mau B."/>
            <person name="Glasner J.D."/>
            <person name="Rose D.J."/>
            <person name="Mayhew G.F."/>
            <person name="Evans P.S."/>
            <person name="Gregor J."/>
            <person name="Kirkpatrick H.A."/>
            <person name="Posfai G."/>
            <person name="Hackett J."/>
            <person name="Klink S."/>
            <person name="Boutin A."/>
            <person name="Shao Y."/>
            <person name="Miller L."/>
            <person name="Grotbeck E.J."/>
            <person name="Davis N.W."/>
            <person name="Lim A."/>
            <person name="Dimalanta E.T."/>
            <person name="Potamousis K."/>
            <person name="Apodaca J."/>
            <person name="Anantharaman T.S."/>
            <person name="Lin J."/>
            <person name="Yen G."/>
            <person name="Schwartz D.C."/>
            <person name="Welch R.A."/>
            <person name="Blattner F.R."/>
        </authorList>
    </citation>
    <scope>NUCLEOTIDE SEQUENCE [LARGE SCALE GENOMIC DNA]</scope>
    <source>
        <strain>O157:H7 / EDL933 / ATCC 700927 / EHEC</strain>
    </source>
</reference>
<reference key="2">
    <citation type="journal article" date="2001" name="DNA Res.">
        <title>Complete genome sequence of enterohemorrhagic Escherichia coli O157:H7 and genomic comparison with a laboratory strain K-12.</title>
        <authorList>
            <person name="Hayashi T."/>
            <person name="Makino K."/>
            <person name="Ohnishi M."/>
            <person name="Kurokawa K."/>
            <person name="Ishii K."/>
            <person name="Yokoyama K."/>
            <person name="Han C.-G."/>
            <person name="Ohtsubo E."/>
            <person name="Nakayama K."/>
            <person name="Murata T."/>
            <person name="Tanaka M."/>
            <person name="Tobe T."/>
            <person name="Iida T."/>
            <person name="Takami H."/>
            <person name="Honda T."/>
            <person name="Sasakawa C."/>
            <person name="Ogasawara N."/>
            <person name="Yasunaga T."/>
            <person name="Kuhara S."/>
            <person name="Shiba T."/>
            <person name="Hattori M."/>
            <person name="Shinagawa H."/>
        </authorList>
    </citation>
    <scope>NUCLEOTIDE SEQUENCE [LARGE SCALE GENOMIC DNA]</scope>
    <source>
        <strain>O157:H7 / Sakai / RIMD 0509952 / EHEC</strain>
    </source>
</reference>
<gene>
    <name evidence="1" type="primary">rsmB</name>
    <name type="synonym">rrmB</name>
    <name evidence="1" type="synonym">sun</name>
    <name type="ordered locus">Z4659</name>
    <name type="ordered locus">ECs4154</name>
</gene>
<name>RSMB_ECO57</name>
<accession>Q8XEE5</accession>
<organism>
    <name type="scientific">Escherichia coli O157:H7</name>
    <dbReference type="NCBI Taxonomy" id="83334"/>
    <lineage>
        <taxon>Bacteria</taxon>
        <taxon>Pseudomonadati</taxon>
        <taxon>Pseudomonadota</taxon>
        <taxon>Gammaproteobacteria</taxon>
        <taxon>Enterobacterales</taxon>
        <taxon>Enterobacteriaceae</taxon>
        <taxon>Escherichia</taxon>
    </lineage>
</organism>
<evidence type="ECO:0000255" key="1">
    <source>
        <dbReference type="HAMAP-Rule" id="MF_01856"/>
    </source>
</evidence>
<feature type="chain" id="PRO_0000211794" description="Ribosomal RNA small subunit methyltransferase B">
    <location>
        <begin position="1"/>
        <end position="429"/>
    </location>
</feature>
<feature type="active site" description="Nucleophile" evidence="1">
    <location>
        <position position="375"/>
    </location>
</feature>
<feature type="binding site" evidence="1">
    <location>
        <begin position="254"/>
        <end position="260"/>
    </location>
    <ligand>
        <name>S-adenosyl-L-methionine</name>
        <dbReference type="ChEBI" id="CHEBI:59789"/>
    </ligand>
</feature>
<feature type="binding site" evidence="1">
    <location>
        <position position="277"/>
    </location>
    <ligand>
        <name>S-adenosyl-L-methionine</name>
        <dbReference type="ChEBI" id="CHEBI:59789"/>
    </ligand>
</feature>
<feature type="binding site" evidence="1">
    <location>
        <position position="303"/>
    </location>
    <ligand>
        <name>S-adenosyl-L-methionine</name>
        <dbReference type="ChEBI" id="CHEBI:59789"/>
    </ligand>
</feature>
<feature type="binding site" evidence="1">
    <location>
        <position position="322"/>
    </location>
    <ligand>
        <name>S-adenosyl-L-methionine</name>
        <dbReference type="ChEBI" id="CHEBI:59789"/>
    </ligand>
</feature>
<comment type="function">
    <text evidence="1">Specifically methylates the cytosine at position 967 (m5C967) of 16S rRNA.</text>
</comment>
<comment type="catalytic activity">
    <reaction evidence="1">
        <text>cytidine(967) in 16S rRNA + S-adenosyl-L-methionine = 5-methylcytidine(967) in 16S rRNA + S-adenosyl-L-homocysteine + H(+)</text>
        <dbReference type="Rhea" id="RHEA:42748"/>
        <dbReference type="Rhea" id="RHEA-COMP:10219"/>
        <dbReference type="Rhea" id="RHEA-COMP:10220"/>
        <dbReference type="ChEBI" id="CHEBI:15378"/>
        <dbReference type="ChEBI" id="CHEBI:57856"/>
        <dbReference type="ChEBI" id="CHEBI:59789"/>
        <dbReference type="ChEBI" id="CHEBI:74483"/>
        <dbReference type="ChEBI" id="CHEBI:82748"/>
        <dbReference type="EC" id="2.1.1.176"/>
    </reaction>
</comment>
<comment type="subcellular location">
    <subcellularLocation>
        <location evidence="1">Cytoplasm</location>
    </subcellularLocation>
</comment>
<comment type="similarity">
    <text evidence="1">Belongs to the class I-like SAM-binding methyltransferase superfamily. RsmB/NOP family.</text>
</comment>
<dbReference type="EC" id="2.1.1.176" evidence="1"/>
<dbReference type="EMBL" id="AE005174">
    <property type="protein sequence ID" value="AAG58410.1"/>
    <property type="molecule type" value="Genomic_DNA"/>
</dbReference>
<dbReference type="EMBL" id="BA000007">
    <property type="protein sequence ID" value="BAB37577.2"/>
    <property type="molecule type" value="Genomic_DNA"/>
</dbReference>
<dbReference type="PIR" id="B91148">
    <property type="entry name" value="B91148"/>
</dbReference>
<dbReference type="PIR" id="F85993">
    <property type="entry name" value="F85993"/>
</dbReference>
<dbReference type="RefSeq" id="NP_312181.1">
    <property type="nucleotide sequence ID" value="NC_002695.1"/>
</dbReference>
<dbReference type="RefSeq" id="WP_001301795.1">
    <property type="nucleotide sequence ID" value="NZ_VOAI01000041.1"/>
</dbReference>
<dbReference type="SMR" id="Q8XEE5"/>
<dbReference type="STRING" id="155864.Z4659"/>
<dbReference type="GeneID" id="915991"/>
<dbReference type="KEGG" id="ece:Z4659"/>
<dbReference type="KEGG" id="ecs:ECs_4154"/>
<dbReference type="PATRIC" id="fig|386585.9.peg.4337"/>
<dbReference type="eggNOG" id="COG0144">
    <property type="taxonomic scope" value="Bacteria"/>
</dbReference>
<dbReference type="eggNOG" id="COG0781">
    <property type="taxonomic scope" value="Bacteria"/>
</dbReference>
<dbReference type="HOGENOM" id="CLU_005316_0_4_6"/>
<dbReference type="OMA" id="RVNRQHH"/>
<dbReference type="Proteomes" id="UP000000558">
    <property type="component" value="Chromosome"/>
</dbReference>
<dbReference type="Proteomes" id="UP000002519">
    <property type="component" value="Chromosome"/>
</dbReference>
<dbReference type="GO" id="GO:0005829">
    <property type="term" value="C:cytosol"/>
    <property type="evidence" value="ECO:0007669"/>
    <property type="project" value="TreeGrafter"/>
</dbReference>
<dbReference type="GO" id="GO:0003723">
    <property type="term" value="F:RNA binding"/>
    <property type="evidence" value="ECO:0007669"/>
    <property type="project" value="UniProtKB-KW"/>
</dbReference>
<dbReference type="GO" id="GO:0009383">
    <property type="term" value="F:rRNA (cytosine-C5-)-methyltransferase activity"/>
    <property type="evidence" value="ECO:0007669"/>
    <property type="project" value="TreeGrafter"/>
</dbReference>
<dbReference type="GO" id="GO:0006355">
    <property type="term" value="P:regulation of DNA-templated transcription"/>
    <property type="evidence" value="ECO:0007669"/>
    <property type="project" value="InterPro"/>
</dbReference>
<dbReference type="GO" id="GO:0070475">
    <property type="term" value="P:rRNA base methylation"/>
    <property type="evidence" value="ECO:0007669"/>
    <property type="project" value="TreeGrafter"/>
</dbReference>
<dbReference type="CDD" id="cd02440">
    <property type="entry name" value="AdoMet_MTases"/>
    <property type="match status" value="1"/>
</dbReference>
<dbReference type="CDD" id="cd00620">
    <property type="entry name" value="Methyltransferase_Sun"/>
    <property type="match status" value="1"/>
</dbReference>
<dbReference type="FunFam" id="1.10.287.730:FF:000001">
    <property type="entry name" value="Ribosomal RNA small subunit methyltransferase B"/>
    <property type="match status" value="1"/>
</dbReference>
<dbReference type="FunFam" id="1.10.940.10:FF:000002">
    <property type="entry name" value="Ribosomal RNA small subunit methyltransferase B"/>
    <property type="match status" value="1"/>
</dbReference>
<dbReference type="FunFam" id="3.30.70.1170:FF:000002">
    <property type="entry name" value="Ribosomal RNA small subunit methyltransferase B"/>
    <property type="match status" value="1"/>
</dbReference>
<dbReference type="FunFam" id="3.40.50.150:FF:000022">
    <property type="entry name" value="Ribosomal RNA small subunit methyltransferase B"/>
    <property type="match status" value="1"/>
</dbReference>
<dbReference type="Gene3D" id="1.10.287.730">
    <property type="entry name" value="Helix hairpin bin"/>
    <property type="match status" value="1"/>
</dbReference>
<dbReference type="Gene3D" id="1.10.940.10">
    <property type="entry name" value="NusB-like"/>
    <property type="match status" value="1"/>
</dbReference>
<dbReference type="Gene3D" id="3.30.70.1170">
    <property type="entry name" value="Sun protein, domain 3"/>
    <property type="match status" value="1"/>
</dbReference>
<dbReference type="Gene3D" id="3.40.50.150">
    <property type="entry name" value="Vaccinia Virus protein VP39"/>
    <property type="match status" value="1"/>
</dbReference>
<dbReference type="HAMAP" id="MF_01856">
    <property type="entry name" value="16SrRNA_methyltr_B"/>
    <property type="match status" value="1"/>
</dbReference>
<dbReference type="InterPro" id="IPR049560">
    <property type="entry name" value="MeTrfase_RsmB-F_NOP2_cat"/>
</dbReference>
<dbReference type="InterPro" id="IPR001678">
    <property type="entry name" value="MeTrfase_RsmB-F_NOP2_dom"/>
</dbReference>
<dbReference type="InterPro" id="IPR035926">
    <property type="entry name" value="NusB-like_sf"/>
</dbReference>
<dbReference type="InterPro" id="IPR006027">
    <property type="entry name" value="NusB_RsmB_TIM44"/>
</dbReference>
<dbReference type="InterPro" id="IPR023267">
    <property type="entry name" value="RCMT"/>
</dbReference>
<dbReference type="InterPro" id="IPR004573">
    <property type="entry name" value="rRNA_ssu_MeTfrase_B"/>
</dbReference>
<dbReference type="InterPro" id="IPR023541">
    <property type="entry name" value="rRNA_ssu_MeTfrase_B_ent"/>
</dbReference>
<dbReference type="InterPro" id="IPR054728">
    <property type="entry name" value="RsmB-like_ferredoxin"/>
</dbReference>
<dbReference type="InterPro" id="IPR048019">
    <property type="entry name" value="RsmB-like_N"/>
</dbReference>
<dbReference type="InterPro" id="IPR018314">
    <property type="entry name" value="RsmB/NOL1/NOP2-like_CS"/>
</dbReference>
<dbReference type="InterPro" id="IPR029063">
    <property type="entry name" value="SAM-dependent_MTases_sf"/>
</dbReference>
<dbReference type="NCBIfam" id="NF008149">
    <property type="entry name" value="PRK10901.1"/>
    <property type="match status" value="1"/>
</dbReference>
<dbReference type="NCBIfam" id="NF011494">
    <property type="entry name" value="PRK14902.1"/>
    <property type="match status" value="1"/>
</dbReference>
<dbReference type="NCBIfam" id="TIGR00563">
    <property type="entry name" value="rsmB"/>
    <property type="match status" value="1"/>
</dbReference>
<dbReference type="PANTHER" id="PTHR22807:SF61">
    <property type="entry name" value="NOL1_NOP2_SUN FAMILY PROTEIN _ ANTITERMINATION NUSB DOMAIN-CONTAINING PROTEIN"/>
    <property type="match status" value="1"/>
</dbReference>
<dbReference type="PANTHER" id="PTHR22807">
    <property type="entry name" value="NOP2 YEAST -RELATED NOL1/NOP2/FMU SUN DOMAIN-CONTAINING"/>
    <property type="match status" value="1"/>
</dbReference>
<dbReference type="Pfam" id="PF01189">
    <property type="entry name" value="Methyltr_RsmB-F"/>
    <property type="match status" value="1"/>
</dbReference>
<dbReference type="Pfam" id="PF01029">
    <property type="entry name" value="NusB"/>
    <property type="match status" value="1"/>
</dbReference>
<dbReference type="Pfam" id="PF22458">
    <property type="entry name" value="RsmF-B_ferredox"/>
    <property type="match status" value="1"/>
</dbReference>
<dbReference type="PRINTS" id="PR02008">
    <property type="entry name" value="RCMTFAMILY"/>
</dbReference>
<dbReference type="SUPFAM" id="SSF48013">
    <property type="entry name" value="NusB-like"/>
    <property type="match status" value="1"/>
</dbReference>
<dbReference type="SUPFAM" id="SSF53335">
    <property type="entry name" value="S-adenosyl-L-methionine-dependent methyltransferases"/>
    <property type="match status" value="1"/>
</dbReference>
<dbReference type="PROSITE" id="PS01153">
    <property type="entry name" value="NOL1_NOP2_SUN"/>
    <property type="match status" value="1"/>
</dbReference>
<dbReference type="PROSITE" id="PS51686">
    <property type="entry name" value="SAM_MT_RSMB_NOP"/>
    <property type="match status" value="1"/>
</dbReference>
<proteinExistence type="inferred from homology"/>
<keyword id="KW-0963">Cytoplasm</keyword>
<keyword id="KW-0489">Methyltransferase</keyword>
<keyword id="KW-1185">Reference proteome</keyword>
<keyword id="KW-0694">RNA-binding</keyword>
<keyword id="KW-0698">rRNA processing</keyword>
<keyword id="KW-0949">S-adenosyl-L-methionine</keyword>
<keyword id="KW-0808">Transferase</keyword>
<protein>
    <recommendedName>
        <fullName evidence="1">Ribosomal RNA small subunit methyltransferase B</fullName>
        <ecNumber evidence="1">2.1.1.176</ecNumber>
    </recommendedName>
    <alternativeName>
        <fullName evidence="1">16S rRNA m5C967 methyltransferase</fullName>
    </alternativeName>
    <alternativeName>
        <fullName evidence="1">rRNA (cytosine-C(5)-)-methyltransferase RsmB</fullName>
    </alternativeName>
</protein>
<sequence length="429" mass="48351">MKKQRNLRSMAAQAVEQVVEQGQSLSNILPPLQQKVSDKDKALLQELCFGVLRTLSQLDWLINKSMARPMTGKQRTVHYLIMVGLYQLLYTRIPPHAALAETVEGAIAIKRPQLKGLINGVLRQFQRQQEELLAEFNTSDARYLHPSWLLKRLQKAYPEQWQSIVEANNQRPPMWLRINRTHHSRDTWLALLDEAGMKGFPHADYPDAVRLETPAPVHALPGFEDGWVTVQDASAQGCMTWLAPQNGEHILDLCAAPGGKTTHILEVAPEAQVVAVDIDEQRLSRVYDNLKRLGMKATVKQGDGRYPSQWCGEQQFDRILLDAPCSATGVIRRHPDIKWLRRDRDIPELAQLQSEILDAIWPHLKSGGTLVYATCSVLPEENSLQIKAFLQRTADAELCETGTPEQPGKQNLPGAEEGDGFFYAKLIKK</sequence>